<evidence type="ECO:0000255" key="1">
    <source>
        <dbReference type="HAMAP-Rule" id="MF_00096"/>
    </source>
</evidence>
<name>MUTS1_HALS3</name>
<reference key="1">
    <citation type="journal article" date="2008" name="Genomics">
        <title>Evolution in the laboratory: the genome of Halobacterium salinarum strain R1 compared to that of strain NRC-1.</title>
        <authorList>
            <person name="Pfeiffer F."/>
            <person name="Schuster S.C."/>
            <person name="Broicher A."/>
            <person name="Falb M."/>
            <person name="Palm P."/>
            <person name="Rodewald K."/>
            <person name="Ruepp A."/>
            <person name="Soppa J."/>
            <person name="Tittor J."/>
            <person name="Oesterhelt D."/>
        </authorList>
    </citation>
    <scope>NUCLEOTIDE SEQUENCE [LARGE SCALE GENOMIC DNA]</scope>
    <source>
        <strain>ATCC 29341 / DSM 671 / R1</strain>
    </source>
</reference>
<organism>
    <name type="scientific">Halobacterium salinarum (strain ATCC 29341 / DSM 671 / R1)</name>
    <dbReference type="NCBI Taxonomy" id="478009"/>
    <lineage>
        <taxon>Archaea</taxon>
        <taxon>Methanobacteriati</taxon>
        <taxon>Methanobacteriota</taxon>
        <taxon>Stenosarchaea group</taxon>
        <taxon>Halobacteria</taxon>
        <taxon>Halobacteriales</taxon>
        <taxon>Halobacteriaceae</taxon>
        <taxon>Halobacterium</taxon>
        <taxon>Halobacterium salinarum NRC-34001</taxon>
    </lineage>
</organism>
<sequence>MGIVDEFQALKAETDADLLAMQVGDFYEFFAADARTVASVLDLQVSEKSNHGSSYPMAGVPVDDLTPYLAALVERGYRVAVAEQSETDAGDIEREIERVVTPGTLLASTDADPRYLAAVVREAGGDWGLAFVDVTTGQFRVTRGADRADAVTELYRFAPAEVLPGPALRGDDDFLGVLRERTDATLTLHDAGAFDAGRATHRVREQFGDGVIESLGVAADGPVVRAAGAAVGYIAAADEGVLASVSRIQPFGGGDHVELDATTQRNLELTETMTGGSDGSLLATIDHTASAAGGRRLAAWVTRPTRDRAELDRRQAAVGALADAALARDALGDVLGEIYDLERLASRAASGRADATDLLRVRDTLAALPDVADALTTTPELAESPARDVLARVDRAAAADVRAELADALADDPPKTLSEGGLLQAGYDEALDELLAAHDEHRAWLDGLADREKDRLGITHLQVDRNKTDGYYIQVGNSETDAVPDGEDGAYRRIKQLKNATRYTMAELDSHEREVLRIEAERAELERELFAALRERVGERAAVLQDVGRALAEVDALVSLAEHAAANQWVRPELVAGDGLDIDAGRHPVVEQTTSFVPNDARFDASRRFQVVTGPNMSGKSTYMRQVAVIVLLAQVGSFVPADAARIGLVDGIYTRVGALDELAGGRSTFMVEMEELSRILHAATSDSLVVLDEVGRGTATYDGISIAWAATEYLHNEVRATTLFATHYHELTALADHLDAVVNVHVAAEERDGAVTFLRTVRDGATDRSYGVHVAALAGVPEPVVDRARGVLDRLREENAVEAKGSAGESVQAVFDVDSGGFVDDAGDDGEADDPEAAAVLDELRTVELAETSPVELLGTVQAWQDRLED</sequence>
<accession>B0R2T0</accession>
<protein>
    <recommendedName>
        <fullName evidence="1">DNA mismatch repair protein MutS 1</fullName>
    </recommendedName>
</protein>
<dbReference type="EMBL" id="AM774415">
    <property type="protein sequence ID" value="CAP13040.1"/>
    <property type="molecule type" value="Genomic_DNA"/>
</dbReference>
<dbReference type="SMR" id="B0R2T0"/>
<dbReference type="EnsemblBacteria" id="CAP13040">
    <property type="protein sequence ID" value="CAP13040"/>
    <property type="gene ID" value="OE_1272R"/>
</dbReference>
<dbReference type="KEGG" id="hsl:OE_1272R"/>
<dbReference type="HOGENOM" id="CLU_002472_4_1_2"/>
<dbReference type="PhylomeDB" id="B0R2T0"/>
<dbReference type="Proteomes" id="UP000001321">
    <property type="component" value="Chromosome"/>
</dbReference>
<dbReference type="GO" id="GO:0005524">
    <property type="term" value="F:ATP binding"/>
    <property type="evidence" value="ECO:0007669"/>
    <property type="project" value="UniProtKB-UniRule"/>
</dbReference>
<dbReference type="GO" id="GO:0140664">
    <property type="term" value="F:ATP-dependent DNA damage sensor activity"/>
    <property type="evidence" value="ECO:0007669"/>
    <property type="project" value="InterPro"/>
</dbReference>
<dbReference type="GO" id="GO:0003684">
    <property type="term" value="F:damaged DNA binding"/>
    <property type="evidence" value="ECO:0007669"/>
    <property type="project" value="UniProtKB-UniRule"/>
</dbReference>
<dbReference type="GO" id="GO:0030983">
    <property type="term" value="F:mismatched DNA binding"/>
    <property type="evidence" value="ECO:0007669"/>
    <property type="project" value="InterPro"/>
</dbReference>
<dbReference type="GO" id="GO:0006298">
    <property type="term" value="P:mismatch repair"/>
    <property type="evidence" value="ECO:0007669"/>
    <property type="project" value="UniProtKB-UniRule"/>
</dbReference>
<dbReference type="CDD" id="cd03284">
    <property type="entry name" value="ABC_MutS1"/>
    <property type="match status" value="1"/>
</dbReference>
<dbReference type="FunFam" id="1.10.1420.10:FF:000001">
    <property type="entry name" value="DNA mismatch repair protein MutS"/>
    <property type="match status" value="1"/>
</dbReference>
<dbReference type="FunFam" id="3.40.50.300:FF:002984">
    <property type="entry name" value="DNA mismatch repair protein MutS 1"/>
    <property type="match status" value="1"/>
</dbReference>
<dbReference type="Gene3D" id="1.10.1420.10">
    <property type="match status" value="2"/>
</dbReference>
<dbReference type="Gene3D" id="3.40.1170.10">
    <property type="entry name" value="DNA repair protein MutS, domain I"/>
    <property type="match status" value="1"/>
</dbReference>
<dbReference type="Gene3D" id="3.30.420.110">
    <property type="entry name" value="MutS, connector domain"/>
    <property type="match status" value="1"/>
</dbReference>
<dbReference type="Gene3D" id="3.40.50.300">
    <property type="entry name" value="P-loop containing nucleotide triphosphate hydrolases"/>
    <property type="match status" value="1"/>
</dbReference>
<dbReference type="HAMAP" id="MF_00096">
    <property type="entry name" value="MutS"/>
    <property type="match status" value="1"/>
</dbReference>
<dbReference type="InterPro" id="IPR005748">
    <property type="entry name" value="DNA_mismatch_repair_MutS"/>
</dbReference>
<dbReference type="InterPro" id="IPR007695">
    <property type="entry name" value="DNA_mismatch_repair_MutS-lik_N"/>
</dbReference>
<dbReference type="InterPro" id="IPR017261">
    <property type="entry name" value="DNA_mismatch_repair_MutS/MSH"/>
</dbReference>
<dbReference type="InterPro" id="IPR000432">
    <property type="entry name" value="DNA_mismatch_repair_MutS_C"/>
</dbReference>
<dbReference type="InterPro" id="IPR007861">
    <property type="entry name" value="DNA_mismatch_repair_MutS_clamp"/>
</dbReference>
<dbReference type="InterPro" id="IPR007696">
    <property type="entry name" value="DNA_mismatch_repair_MutS_core"/>
</dbReference>
<dbReference type="InterPro" id="IPR016151">
    <property type="entry name" value="DNA_mismatch_repair_MutS_N"/>
</dbReference>
<dbReference type="InterPro" id="IPR036187">
    <property type="entry name" value="DNA_mismatch_repair_MutS_sf"/>
</dbReference>
<dbReference type="InterPro" id="IPR007860">
    <property type="entry name" value="DNA_mmatch_repair_MutS_con_dom"/>
</dbReference>
<dbReference type="InterPro" id="IPR045076">
    <property type="entry name" value="MutS"/>
</dbReference>
<dbReference type="InterPro" id="IPR036678">
    <property type="entry name" value="MutS_con_dom_sf"/>
</dbReference>
<dbReference type="InterPro" id="IPR027417">
    <property type="entry name" value="P-loop_NTPase"/>
</dbReference>
<dbReference type="NCBIfam" id="TIGR01070">
    <property type="entry name" value="mutS1"/>
    <property type="match status" value="1"/>
</dbReference>
<dbReference type="NCBIfam" id="NF003810">
    <property type="entry name" value="PRK05399.1"/>
    <property type="match status" value="1"/>
</dbReference>
<dbReference type="PANTHER" id="PTHR11361:SF34">
    <property type="entry name" value="DNA MISMATCH REPAIR PROTEIN MSH1, MITOCHONDRIAL"/>
    <property type="match status" value="1"/>
</dbReference>
<dbReference type="PANTHER" id="PTHR11361">
    <property type="entry name" value="DNA MISMATCH REPAIR PROTEIN MUTS FAMILY MEMBER"/>
    <property type="match status" value="1"/>
</dbReference>
<dbReference type="Pfam" id="PF01624">
    <property type="entry name" value="MutS_I"/>
    <property type="match status" value="1"/>
</dbReference>
<dbReference type="Pfam" id="PF05188">
    <property type="entry name" value="MutS_II"/>
    <property type="match status" value="1"/>
</dbReference>
<dbReference type="Pfam" id="PF05192">
    <property type="entry name" value="MutS_III"/>
    <property type="match status" value="1"/>
</dbReference>
<dbReference type="Pfam" id="PF05190">
    <property type="entry name" value="MutS_IV"/>
    <property type="match status" value="1"/>
</dbReference>
<dbReference type="Pfam" id="PF00488">
    <property type="entry name" value="MutS_V"/>
    <property type="match status" value="1"/>
</dbReference>
<dbReference type="PIRSF" id="PIRSF037677">
    <property type="entry name" value="DNA_mis_repair_Msh6"/>
    <property type="match status" value="1"/>
</dbReference>
<dbReference type="SMART" id="SM00534">
    <property type="entry name" value="MUTSac"/>
    <property type="match status" value="1"/>
</dbReference>
<dbReference type="SMART" id="SM00533">
    <property type="entry name" value="MUTSd"/>
    <property type="match status" value="1"/>
</dbReference>
<dbReference type="SUPFAM" id="SSF55271">
    <property type="entry name" value="DNA repair protein MutS, domain I"/>
    <property type="match status" value="1"/>
</dbReference>
<dbReference type="SUPFAM" id="SSF53150">
    <property type="entry name" value="DNA repair protein MutS, domain II"/>
    <property type="match status" value="1"/>
</dbReference>
<dbReference type="SUPFAM" id="SSF48334">
    <property type="entry name" value="DNA repair protein MutS, domain III"/>
    <property type="match status" value="1"/>
</dbReference>
<dbReference type="SUPFAM" id="SSF52540">
    <property type="entry name" value="P-loop containing nucleoside triphosphate hydrolases"/>
    <property type="match status" value="1"/>
</dbReference>
<dbReference type="PROSITE" id="PS00486">
    <property type="entry name" value="DNA_MISMATCH_REPAIR_2"/>
    <property type="match status" value="1"/>
</dbReference>
<keyword id="KW-0067">ATP-binding</keyword>
<keyword id="KW-0227">DNA damage</keyword>
<keyword id="KW-0234">DNA repair</keyword>
<keyword id="KW-0238">DNA-binding</keyword>
<keyword id="KW-0547">Nucleotide-binding</keyword>
<gene>
    <name evidence="1" type="primary">mutS1</name>
    <name type="ordered locus">OE_1272R</name>
</gene>
<feature type="chain" id="PRO_0000335242" description="DNA mismatch repair protein MutS 1">
    <location>
        <begin position="1"/>
        <end position="871"/>
    </location>
</feature>
<feature type="binding site" evidence="1">
    <location>
        <begin position="614"/>
        <end position="621"/>
    </location>
    <ligand>
        <name>ATP</name>
        <dbReference type="ChEBI" id="CHEBI:30616"/>
    </ligand>
</feature>
<comment type="function">
    <text evidence="1">This protein is involved in the repair of mismatches in DNA. It is possible that it carries out the mismatch recognition step. This protein has a weak ATPase activity.</text>
</comment>
<comment type="similarity">
    <text evidence="1">Belongs to the DNA mismatch repair MutS family.</text>
</comment>
<proteinExistence type="inferred from homology"/>